<evidence type="ECO:0000250" key="1"/>
<evidence type="ECO:0000250" key="2">
    <source>
        <dbReference type="UniProtKB" id="Q8K1H1"/>
    </source>
</evidence>
<evidence type="ECO:0000250" key="3">
    <source>
        <dbReference type="UniProtKB" id="Q8NHU6"/>
    </source>
</evidence>
<evidence type="ECO:0000255" key="4">
    <source>
        <dbReference type="PROSITE-ProRule" id="PRU00211"/>
    </source>
</evidence>
<evidence type="ECO:0000255" key="5">
    <source>
        <dbReference type="PROSITE-ProRule" id="PRU00975"/>
    </source>
</evidence>
<evidence type="ECO:0000256" key="6">
    <source>
        <dbReference type="SAM" id="MobiDB-lite"/>
    </source>
</evidence>
<evidence type="ECO:0000305" key="7"/>
<comment type="function">
    <text evidence="1">Component of specific cytoplasmic RNA granules involved in post-transcriptional regulation of specific genes: probably acts by binding to specific mRNAs and regulating their translation. Required for lens transparency during lens development, by regulating translation of genes such as CRYBB3 and HSPB1 in the developing lens. Also required during spermatogenesis (By similarity).</text>
</comment>
<comment type="subunit">
    <text evidence="1">Found in a mRNP complex, at least composed of TDRD1, TDRD6, TDRD7 and DDX4. Found in a complex containing CABLES1, CDK16 and CDK17. Interacts with CABLES1, CDK17 and PIWIL1 (By similarity).</text>
</comment>
<comment type="subcellular location">
    <subcellularLocation>
        <location evidence="1">Cytoplasm</location>
    </subcellularLocation>
    <text evidence="1">Localizes to cytoplasmic RNA granules (By similarity). Present in chromatoid body (CB) of spermatids (mammalian counterpart of germplasm, pole plasm or polar granules in Drosophila germ cells), also named processing bodies (P-bodies) in somatic cells. Detected in the multilobular cytoplasmic CBs (also called intermitochondrial cementin) in pachytene spermatocytes and as a single perinuclear CB in haploid round spermatids (By similarity).</text>
</comment>
<comment type="similarity">
    <text evidence="7">Belongs to the TDRD7 family.</text>
</comment>
<sequence length="1125" mass="126655">MLEADLVSKMLRAVLQSHKNGIALPRLQGEYRSLTGDWIPFKQLGYPTLEAYLRSVPAVVRIETSRSGEITCYAMACTETARIAQLVARQRSSKRKTGRQVNCQMRVKKTMPFFLEGKPKATLRQPGFSSDFSVSKKPNPTLLRDKGNSLGVKSDAEMPPYTLHTTLRSEVFKDVPVQRHVTMSTNNRVIPMCSHPDVDPLQYVGSVFKKHKYLRFSPKASLPPPFQMHLSRTCAKEMNGNLSQTVEKPNVTPPASYTYKMDEVQNRIKEILNKHNNGIWISKLPHFYKELYKEELNQGILQQFEHWPHICTVEKPGSGGQDLLLYPAKRKQLLRSELDGEKVPPSPLPAPKQIPPLKGCPAVMPGDFKEKVAELLTKYSSGLWASALPKAFEDMYKMKFPEDALKNLASLSDVCTIDYISGNPQKAILYAKLPLPTDKILKDAGQAHGDYDIKSMIEQEYLQIEENIAKSVDTFLENTAVPPLIIPTEASPSVLVVELSNTNEVVIRYVGKDYSAAQELMEDEMKEYYSKNPKVTPVQTVHVGQLLAVNAEEDAWLRAQIISTEENRIKVCYVDYGFSENIEKSKAYKLNPKFCSLSFQATKCKLAGLEVLSDDPDLVKVVESLTCGKIFAVEILEKADIPLVVLYDTSGDDDVNINATCLKAICDKSLEAHLQIDAMYTNVRVTNICSDGTLYCQVPCKGLNKLNDLLHKIEDYFHCKHMTSEYFVSLPFCGKVCLFHCKGKWLRVEITNVHSSRALDVQFLDSGTVTSVKVSELREIPPRFLQEIIVIPPQAIKCCLADLPQSIGMWTPDAVLWLRDSVLNCSDCSIKVTKVDETRGIAHIYLFTPKNFPDPHRSINRQITNADLWKHQKDVFLSAISSGTSSPNSKSGSTPVPGSTGDNFRKSLTDAIKKSVVDHTSSLSVEELPPPVHLSKPGEHMDVYVPVACHPGYFVIQPWQEIHKLEVLMEEMILYYSVSEERHVAVEKDQVYAAKVENKWHRVLLKGILTNGLVSVYELDYGKHELVNIRKVQPLAAVFRKLPFQAVTAQLAGVKCNQWSEEASMVFRNHVEKKPLVALVQTVIENANPWDRKVVVYLVDTSLPDTDIWIHDFMSEYLVELSKVN</sequence>
<feature type="chain" id="PRO_0000409515" description="Tudor domain-containing protein 7">
    <location>
        <begin position="1"/>
        <end position="1125"/>
    </location>
</feature>
<feature type="domain" description="HTH OST-type 1" evidence="5">
    <location>
        <begin position="3"/>
        <end position="76"/>
    </location>
</feature>
<feature type="domain" description="HTH OST-type 2" evidence="5">
    <location>
        <begin position="260"/>
        <end position="329"/>
    </location>
</feature>
<feature type="domain" description="HTH OST-type 3" evidence="5">
    <location>
        <begin position="364"/>
        <end position="433"/>
    </location>
</feature>
<feature type="domain" description="Tudor 1" evidence="4">
    <location>
        <begin position="540"/>
        <end position="597"/>
    </location>
</feature>
<feature type="domain" description="Tudor 2" evidence="4">
    <location>
        <begin position="730"/>
        <end position="787"/>
    </location>
</feature>
<feature type="region of interest" description="Disordered" evidence="6">
    <location>
        <begin position="126"/>
        <end position="157"/>
    </location>
</feature>
<feature type="region of interest" description="Disordered" evidence="6">
    <location>
        <begin position="881"/>
        <end position="904"/>
    </location>
</feature>
<feature type="region of interest" description="Interaction with CDK17" evidence="1">
    <location>
        <begin position="888"/>
        <end position="1125"/>
    </location>
</feature>
<feature type="region of interest" description="Interaction with CABLES1" evidence="1">
    <location>
        <begin position="920"/>
        <end position="1125"/>
    </location>
</feature>
<feature type="compositionally biased region" description="Polar residues" evidence="6">
    <location>
        <begin position="127"/>
        <end position="138"/>
    </location>
</feature>
<feature type="compositionally biased region" description="Low complexity" evidence="6">
    <location>
        <begin position="881"/>
        <end position="895"/>
    </location>
</feature>
<feature type="modified residue" description="Phosphoserine" evidence="3">
    <location>
        <position position="346"/>
    </location>
</feature>
<feature type="modified residue" description="Phosphoserine" evidence="2">
    <location>
        <position position="886"/>
    </location>
</feature>
<protein>
    <recommendedName>
        <fullName>Tudor domain-containing protein 7</fullName>
    </recommendedName>
</protein>
<reference key="1">
    <citation type="journal article" date="2005" name="Nature">
        <title>Genome sequence, comparative analysis and haplotype structure of the domestic dog.</title>
        <authorList>
            <person name="Lindblad-Toh K."/>
            <person name="Wade C.M."/>
            <person name="Mikkelsen T.S."/>
            <person name="Karlsson E.K."/>
            <person name="Jaffe D.B."/>
            <person name="Kamal M."/>
            <person name="Clamp M."/>
            <person name="Chang J.L."/>
            <person name="Kulbokas E.J. III"/>
            <person name="Zody M.C."/>
            <person name="Mauceli E."/>
            <person name="Xie X."/>
            <person name="Breen M."/>
            <person name="Wayne R.K."/>
            <person name="Ostrander E.A."/>
            <person name="Ponting C.P."/>
            <person name="Galibert F."/>
            <person name="Smith D.R."/>
            <person name="deJong P.J."/>
            <person name="Kirkness E.F."/>
            <person name="Alvarez P."/>
            <person name="Biagi T."/>
            <person name="Brockman W."/>
            <person name="Butler J."/>
            <person name="Chin C.-W."/>
            <person name="Cook A."/>
            <person name="Cuff J."/>
            <person name="Daly M.J."/>
            <person name="DeCaprio D."/>
            <person name="Gnerre S."/>
            <person name="Grabherr M."/>
            <person name="Kellis M."/>
            <person name="Kleber M."/>
            <person name="Bardeleben C."/>
            <person name="Goodstadt L."/>
            <person name="Heger A."/>
            <person name="Hitte C."/>
            <person name="Kim L."/>
            <person name="Koepfli K.-P."/>
            <person name="Parker H.G."/>
            <person name="Pollinger J.P."/>
            <person name="Searle S.M.J."/>
            <person name="Sutter N.B."/>
            <person name="Thomas R."/>
            <person name="Webber C."/>
            <person name="Baldwin J."/>
            <person name="Abebe A."/>
            <person name="Abouelleil A."/>
            <person name="Aftuck L."/>
            <person name="Ait-Zahra M."/>
            <person name="Aldredge T."/>
            <person name="Allen N."/>
            <person name="An P."/>
            <person name="Anderson S."/>
            <person name="Antoine C."/>
            <person name="Arachchi H."/>
            <person name="Aslam A."/>
            <person name="Ayotte L."/>
            <person name="Bachantsang P."/>
            <person name="Barry A."/>
            <person name="Bayul T."/>
            <person name="Benamara M."/>
            <person name="Berlin A."/>
            <person name="Bessette D."/>
            <person name="Blitshteyn B."/>
            <person name="Bloom T."/>
            <person name="Blye J."/>
            <person name="Boguslavskiy L."/>
            <person name="Bonnet C."/>
            <person name="Boukhgalter B."/>
            <person name="Brown A."/>
            <person name="Cahill P."/>
            <person name="Calixte N."/>
            <person name="Camarata J."/>
            <person name="Cheshatsang Y."/>
            <person name="Chu J."/>
            <person name="Citroen M."/>
            <person name="Collymore A."/>
            <person name="Cooke P."/>
            <person name="Dawoe T."/>
            <person name="Daza R."/>
            <person name="Decktor K."/>
            <person name="DeGray S."/>
            <person name="Dhargay N."/>
            <person name="Dooley K."/>
            <person name="Dooley K."/>
            <person name="Dorje P."/>
            <person name="Dorjee K."/>
            <person name="Dorris L."/>
            <person name="Duffey N."/>
            <person name="Dupes A."/>
            <person name="Egbiremolen O."/>
            <person name="Elong R."/>
            <person name="Falk J."/>
            <person name="Farina A."/>
            <person name="Faro S."/>
            <person name="Ferguson D."/>
            <person name="Ferreira P."/>
            <person name="Fisher S."/>
            <person name="FitzGerald M."/>
            <person name="Foley K."/>
            <person name="Foley C."/>
            <person name="Franke A."/>
            <person name="Friedrich D."/>
            <person name="Gage D."/>
            <person name="Garber M."/>
            <person name="Gearin G."/>
            <person name="Giannoukos G."/>
            <person name="Goode T."/>
            <person name="Goyette A."/>
            <person name="Graham J."/>
            <person name="Grandbois E."/>
            <person name="Gyaltsen K."/>
            <person name="Hafez N."/>
            <person name="Hagopian D."/>
            <person name="Hagos B."/>
            <person name="Hall J."/>
            <person name="Healy C."/>
            <person name="Hegarty R."/>
            <person name="Honan T."/>
            <person name="Horn A."/>
            <person name="Houde N."/>
            <person name="Hughes L."/>
            <person name="Hunnicutt L."/>
            <person name="Husby M."/>
            <person name="Jester B."/>
            <person name="Jones C."/>
            <person name="Kamat A."/>
            <person name="Kanga B."/>
            <person name="Kells C."/>
            <person name="Khazanovich D."/>
            <person name="Kieu A.C."/>
            <person name="Kisner P."/>
            <person name="Kumar M."/>
            <person name="Lance K."/>
            <person name="Landers T."/>
            <person name="Lara M."/>
            <person name="Lee W."/>
            <person name="Leger J.-P."/>
            <person name="Lennon N."/>
            <person name="Leuper L."/>
            <person name="LeVine S."/>
            <person name="Liu J."/>
            <person name="Liu X."/>
            <person name="Lokyitsang Y."/>
            <person name="Lokyitsang T."/>
            <person name="Lui A."/>
            <person name="Macdonald J."/>
            <person name="Major J."/>
            <person name="Marabella R."/>
            <person name="Maru K."/>
            <person name="Matthews C."/>
            <person name="McDonough S."/>
            <person name="Mehta T."/>
            <person name="Meldrim J."/>
            <person name="Melnikov A."/>
            <person name="Meneus L."/>
            <person name="Mihalev A."/>
            <person name="Mihova T."/>
            <person name="Miller K."/>
            <person name="Mittelman R."/>
            <person name="Mlenga V."/>
            <person name="Mulrain L."/>
            <person name="Munson G."/>
            <person name="Navidi A."/>
            <person name="Naylor J."/>
            <person name="Nguyen T."/>
            <person name="Nguyen N."/>
            <person name="Nguyen C."/>
            <person name="Nguyen T."/>
            <person name="Nicol R."/>
            <person name="Norbu N."/>
            <person name="Norbu C."/>
            <person name="Novod N."/>
            <person name="Nyima T."/>
            <person name="Olandt P."/>
            <person name="O'Neill B."/>
            <person name="O'Neill K."/>
            <person name="Osman S."/>
            <person name="Oyono L."/>
            <person name="Patti C."/>
            <person name="Perrin D."/>
            <person name="Phunkhang P."/>
            <person name="Pierre F."/>
            <person name="Priest M."/>
            <person name="Rachupka A."/>
            <person name="Raghuraman S."/>
            <person name="Rameau R."/>
            <person name="Ray V."/>
            <person name="Raymond C."/>
            <person name="Rege F."/>
            <person name="Rise C."/>
            <person name="Rogers J."/>
            <person name="Rogov P."/>
            <person name="Sahalie J."/>
            <person name="Settipalli S."/>
            <person name="Sharpe T."/>
            <person name="Shea T."/>
            <person name="Sheehan M."/>
            <person name="Sherpa N."/>
            <person name="Shi J."/>
            <person name="Shih D."/>
            <person name="Sloan J."/>
            <person name="Smith C."/>
            <person name="Sparrow T."/>
            <person name="Stalker J."/>
            <person name="Stange-Thomann N."/>
            <person name="Stavropoulos S."/>
            <person name="Stone C."/>
            <person name="Stone S."/>
            <person name="Sykes S."/>
            <person name="Tchuinga P."/>
            <person name="Tenzing P."/>
            <person name="Tesfaye S."/>
            <person name="Thoulutsang D."/>
            <person name="Thoulutsang Y."/>
            <person name="Topham K."/>
            <person name="Topping I."/>
            <person name="Tsamla T."/>
            <person name="Vassiliev H."/>
            <person name="Venkataraman V."/>
            <person name="Vo A."/>
            <person name="Wangchuk T."/>
            <person name="Wangdi T."/>
            <person name="Weiand M."/>
            <person name="Wilkinson J."/>
            <person name="Wilson A."/>
            <person name="Yadav S."/>
            <person name="Yang S."/>
            <person name="Yang X."/>
            <person name="Young G."/>
            <person name="Yu Q."/>
            <person name="Zainoun J."/>
            <person name="Zembek L."/>
            <person name="Zimmer A."/>
            <person name="Lander E.S."/>
        </authorList>
    </citation>
    <scope>NUCLEOTIDE SEQUENCE [LARGE SCALE GENOMIC DNA]</scope>
    <source>
        <strain>Boxer</strain>
    </source>
</reference>
<organism>
    <name type="scientific">Canis lupus familiaris</name>
    <name type="common">Dog</name>
    <name type="synonym">Canis familiaris</name>
    <dbReference type="NCBI Taxonomy" id="9615"/>
    <lineage>
        <taxon>Eukaryota</taxon>
        <taxon>Metazoa</taxon>
        <taxon>Chordata</taxon>
        <taxon>Craniata</taxon>
        <taxon>Vertebrata</taxon>
        <taxon>Euteleostomi</taxon>
        <taxon>Mammalia</taxon>
        <taxon>Eutheria</taxon>
        <taxon>Laurasiatheria</taxon>
        <taxon>Carnivora</taxon>
        <taxon>Caniformia</taxon>
        <taxon>Canidae</taxon>
        <taxon>Canis</taxon>
    </lineage>
</organism>
<keyword id="KW-0963">Cytoplasm</keyword>
<keyword id="KW-0221">Differentiation</keyword>
<keyword id="KW-0597">Phosphoprotein</keyword>
<keyword id="KW-1185">Reference proteome</keyword>
<keyword id="KW-0677">Repeat</keyword>
<keyword id="KW-0694">RNA-binding</keyword>
<keyword id="KW-0744">Spermatogenesis</keyword>
<name>TDRD7_CANLF</name>
<gene>
    <name type="primary">TDRD7</name>
</gene>
<proteinExistence type="inferred from homology"/>
<accession>E2RDV1</accession>
<dbReference type="SMR" id="E2RDV1"/>
<dbReference type="FunCoup" id="E2RDV1">
    <property type="interactions" value="208"/>
</dbReference>
<dbReference type="STRING" id="9615.ENSCAFP00000003516"/>
<dbReference type="PaxDb" id="9612-ENSCAFP00000003516"/>
<dbReference type="eggNOG" id="KOG2039">
    <property type="taxonomic scope" value="Eukaryota"/>
</dbReference>
<dbReference type="InParanoid" id="E2RDV1"/>
<dbReference type="OrthoDB" id="10034606at2759"/>
<dbReference type="Proteomes" id="UP000002254">
    <property type="component" value="Unplaced"/>
</dbReference>
<dbReference type="Proteomes" id="UP000694429">
    <property type="component" value="Unplaced"/>
</dbReference>
<dbReference type="Proteomes" id="UP000694542">
    <property type="component" value="Unplaced"/>
</dbReference>
<dbReference type="Proteomes" id="UP000805418">
    <property type="component" value="Unplaced"/>
</dbReference>
<dbReference type="GO" id="GO:0043186">
    <property type="term" value="C:P granule"/>
    <property type="evidence" value="ECO:0000318"/>
    <property type="project" value="GO_Central"/>
</dbReference>
<dbReference type="GO" id="GO:0035770">
    <property type="term" value="C:ribonucleoprotein granule"/>
    <property type="evidence" value="ECO:0000250"/>
    <property type="project" value="UniProtKB"/>
</dbReference>
<dbReference type="GO" id="GO:0003729">
    <property type="term" value="F:mRNA binding"/>
    <property type="evidence" value="ECO:0000250"/>
    <property type="project" value="UniProtKB"/>
</dbReference>
<dbReference type="GO" id="GO:0070306">
    <property type="term" value="P:lens fiber cell differentiation"/>
    <property type="evidence" value="ECO:0000250"/>
    <property type="project" value="UniProtKB"/>
</dbReference>
<dbReference type="GO" id="GO:0002089">
    <property type="term" value="P:lens morphogenesis in camera-type eye"/>
    <property type="evidence" value="ECO:0000250"/>
    <property type="project" value="UniProtKB"/>
</dbReference>
<dbReference type="GO" id="GO:0030719">
    <property type="term" value="P:P granule organization"/>
    <property type="evidence" value="ECO:0000318"/>
    <property type="project" value="GO_Central"/>
</dbReference>
<dbReference type="GO" id="GO:0034587">
    <property type="term" value="P:piRNA processing"/>
    <property type="evidence" value="ECO:0000318"/>
    <property type="project" value="GO_Central"/>
</dbReference>
<dbReference type="GO" id="GO:0010608">
    <property type="term" value="P:post-transcriptional regulation of gene expression"/>
    <property type="evidence" value="ECO:0000250"/>
    <property type="project" value="UniProtKB"/>
</dbReference>
<dbReference type="GO" id="GO:0007283">
    <property type="term" value="P:spermatogenesis"/>
    <property type="evidence" value="ECO:0000250"/>
    <property type="project" value="UniProtKB"/>
</dbReference>
<dbReference type="CDD" id="cd09986">
    <property type="entry name" value="LOTUS_1_TDRD7"/>
    <property type="match status" value="1"/>
</dbReference>
<dbReference type="CDD" id="cd09973">
    <property type="entry name" value="LOTUS_2_TDRD7"/>
    <property type="match status" value="1"/>
</dbReference>
<dbReference type="CDD" id="cd09974">
    <property type="entry name" value="LOTUS_3_TDRD7"/>
    <property type="match status" value="1"/>
</dbReference>
<dbReference type="CDD" id="cd20427">
    <property type="entry name" value="Tudor_TDRD7_rpt1"/>
    <property type="match status" value="1"/>
</dbReference>
<dbReference type="CDD" id="cd20428">
    <property type="entry name" value="Tudor_TDRD7_rpt2"/>
    <property type="match status" value="1"/>
</dbReference>
<dbReference type="CDD" id="cd20429">
    <property type="entry name" value="Tudor_TDRD7_rpt3"/>
    <property type="match status" value="1"/>
</dbReference>
<dbReference type="FunFam" id="2.40.50.90:FF:000006">
    <property type="entry name" value="Tudor domain-containing protein 7"/>
    <property type="match status" value="1"/>
</dbReference>
<dbReference type="FunFam" id="3.30.420.610:FF:000008">
    <property type="entry name" value="Tudor domain-containing protein 7"/>
    <property type="match status" value="1"/>
</dbReference>
<dbReference type="FunFam" id="2.30.30.140:FF:000065">
    <property type="entry name" value="tudor domain-containing protein 7"/>
    <property type="match status" value="1"/>
</dbReference>
<dbReference type="FunFam" id="2.30.30.140:FF:000045">
    <property type="entry name" value="tudor domain-containing protein 7 isoform X1"/>
    <property type="match status" value="1"/>
</dbReference>
<dbReference type="FunFam" id="3.30.420.610:FF:000009">
    <property type="entry name" value="Tudor domain-containing protein 7 isoform X2"/>
    <property type="match status" value="1"/>
</dbReference>
<dbReference type="FunFam" id="2.30.30.140:FF:000053">
    <property type="entry name" value="tudor domain-containing protein 7 isoform X2"/>
    <property type="match status" value="1"/>
</dbReference>
<dbReference type="FunFam" id="3.30.420.610:FF:000006">
    <property type="entry name" value="tudor domain-containing protein 7 isoform X2"/>
    <property type="match status" value="1"/>
</dbReference>
<dbReference type="Gene3D" id="2.30.30.140">
    <property type="match status" value="3"/>
</dbReference>
<dbReference type="Gene3D" id="2.40.50.90">
    <property type="match status" value="3"/>
</dbReference>
<dbReference type="Gene3D" id="3.30.420.610">
    <property type="entry name" value="LOTUS domain-like"/>
    <property type="match status" value="3"/>
</dbReference>
<dbReference type="InterPro" id="IPR041966">
    <property type="entry name" value="LOTUS-like"/>
</dbReference>
<dbReference type="InterPro" id="IPR025605">
    <property type="entry name" value="OST-HTH/LOTUS_dom"/>
</dbReference>
<dbReference type="InterPro" id="IPR035437">
    <property type="entry name" value="SNase_OB-fold_sf"/>
</dbReference>
<dbReference type="InterPro" id="IPR037978">
    <property type="entry name" value="TDRD7_LOTUS_3"/>
</dbReference>
<dbReference type="InterPro" id="IPR002999">
    <property type="entry name" value="Tudor"/>
</dbReference>
<dbReference type="InterPro" id="IPR050621">
    <property type="entry name" value="Tudor_domain_containing"/>
</dbReference>
<dbReference type="InterPro" id="IPR047448">
    <property type="entry name" value="Tudor_TDRD7_rpt2"/>
</dbReference>
<dbReference type="InterPro" id="IPR047449">
    <property type="entry name" value="Tudor_TDRD7_rpt3"/>
</dbReference>
<dbReference type="PANTHER" id="PTHR22948">
    <property type="entry name" value="TUDOR DOMAIN CONTAINING PROTEIN"/>
    <property type="match status" value="1"/>
</dbReference>
<dbReference type="PANTHER" id="PTHR22948:SF14">
    <property type="entry name" value="TUDOR DOMAIN-CONTAINING PROTEIN 7"/>
    <property type="match status" value="1"/>
</dbReference>
<dbReference type="Pfam" id="PF12872">
    <property type="entry name" value="OST-HTH"/>
    <property type="match status" value="2"/>
</dbReference>
<dbReference type="Pfam" id="PF00567">
    <property type="entry name" value="TUDOR"/>
    <property type="match status" value="3"/>
</dbReference>
<dbReference type="SMART" id="SM00333">
    <property type="entry name" value="TUDOR"/>
    <property type="match status" value="3"/>
</dbReference>
<dbReference type="SUPFAM" id="SSF63748">
    <property type="entry name" value="Tudor/PWWP/MBT"/>
    <property type="match status" value="3"/>
</dbReference>
<dbReference type="PROSITE" id="PS51644">
    <property type="entry name" value="HTH_OST"/>
    <property type="match status" value="3"/>
</dbReference>
<dbReference type="PROSITE" id="PS50304">
    <property type="entry name" value="TUDOR"/>
    <property type="match status" value="2"/>
</dbReference>